<feature type="chain" id="PRO_1000138451" description="Cell division protein ZapB">
    <location>
        <begin position="1"/>
        <end position="67"/>
    </location>
</feature>
<feature type="coiled-coil region" evidence="1">
    <location>
        <begin position="3"/>
        <end position="59"/>
    </location>
</feature>
<proteinExistence type="inferred from homology"/>
<reference key="1">
    <citation type="submission" date="2008-01" db="EMBL/GenBank/DDBJ databases">
        <title>Complete sequence of Shewanella halifaxensis HAW-EB4.</title>
        <authorList>
            <consortium name="US DOE Joint Genome Institute"/>
            <person name="Copeland A."/>
            <person name="Lucas S."/>
            <person name="Lapidus A."/>
            <person name="Glavina del Rio T."/>
            <person name="Dalin E."/>
            <person name="Tice H."/>
            <person name="Bruce D."/>
            <person name="Goodwin L."/>
            <person name="Pitluck S."/>
            <person name="Sims D."/>
            <person name="Brettin T."/>
            <person name="Detter J.C."/>
            <person name="Han C."/>
            <person name="Kuske C.R."/>
            <person name="Schmutz J."/>
            <person name="Larimer F."/>
            <person name="Land M."/>
            <person name="Hauser L."/>
            <person name="Kyrpides N."/>
            <person name="Kim E."/>
            <person name="Zhao J.-S."/>
            <person name="Richardson P."/>
        </authorList>
    </citation>
    <scope>NUCLEOTIDE SEQUENCE [LARGE SCALE GENOMIC DNA]</scope>
    <source>
        <strain>HAW-EB4</strain>
    </source>
</reference>
<gene>
    <name evidence="1" type="primary">zapB</name>
    <name type="ordered locus">Shal_3978</name>
</gene>
<sequence length="67" mass="7619">MSLELLSKLETKIQAALETIELLKMELEEEKQTSSSLSEQNQQLQQELTSWNEKVTGLVGLLNEEVN</sequence>
<name>ZAPB_SHEHH</name>
<organism>
    <name type="scientific">Shewanella halifaxensis (strain HAW-EB4)</name>
    <dbReference type="NCBI Taxonomy" id="458817"/>
    <lineage>
        <taxon>Bacteria</taxon>
        <taxon>Pseudomonadati</taxon>
        <taxon>Pseudomonadota</taxon>
        <taxon>Gammaproteobacteria</taxon>
        <taxon>Alteromonadales</taxon>
        <taxon>Shewanellaceae</taxon>
        <taxon>Shewanella</taxon>
    </lineage>
</organism>
<protein>
    <recommendedName>
        <fullName evidence="1">Cell division protein ZapB</fullName>
    </recommendedName>
</protein>
<accession>B0TKD2</accession>
<dbReference type="EMBL" id="CP000931">
    <property type="protein sequence ID" value="ABZ78518.1"/>
    <property type="molecule type" value="Genomic_DNA"/>
</dbReference>
<dbReference type="RefSeq" id="WP_012279035.1">
    <property type="nucleotide sequence ID" value="NC_010334.1"/>
</dbReference>
<dbReference type="SMR" id="B0TKD2"/>
<dbReference type="STRING" id="458817.Shal_3978"/>
<dbReference type="KEGG" id="shl:Shal_3978"/>
<dbReference type="eggNOG" id="COG3074">
    <property type="taxonomic scope" value="Bacteria"/>
</dbReference>
<dbReference type="HOGENOM" id="CLU_171174_1_0_6"/>
<dbReference type="Proteomes" id="UP000001317">
    <property type="component" value="Chromosome"/>
</dbReference>
<dbReference type="GO" id="GO:0005737">
    <property type="term" value="C:cytoplasm"/>
    <property type="evidence" value="ECO:0007669"/>
    <property type="project" value="UniProtKB-SubCell"/>
</dbReference>
<dbReference type="GO" id="GO:0000917">
    <property type="term" value="P:division septum assembly"/>
    <property type="evidence" value="ECO:0007669"/>
    <property type="project" value="UniProtKB-KW"/>
</dbReference>
<dbReference type="GO" id="GO:0043093">
    <property type="term" value="P:FtsZ-dependent cytokinesis"/>
    <property type="evidence" value="ECO:0007669"/>
    <property type="project" value="UniProtKB-UniRule"/>
</dbReference>
<dbReference type="Gene3D" id="1.20.5.340">
    <property type="match status" value="1"/>
</dbReference>
<dbReference type="HAMAP" id="MF_01196">
    <property type="entry name" value="ZapB"/>
    <property type="match status" value="1"/>
</dbReference>
<dbReference type="InterPro" id="IPR009252">
    <property type="entry name" value="Cell_div_ZapB"/>
</dbReference>
<dbReference type="Pfam" id="PF06005">
    <property type="entry name" value="ZapB"/>
    <property type="match status" value="1"/>
</dbReference>
<keyword id="KW-0131">Cell cycle</keyword>
<keyword id="KW-0132">Cell division</keyword>
<keyword id="KW-0175">Coiled coil</keyword>
<keyword id="KW-0963">Cytoplasm</keyword>
<keyword id="KW-0717">Septation</keyword>
<comment type="function">
    <text evidence="1">Non-essential, abundant cell division factor that is required for proper Z-ring formation. It is recruited early to the divisome by direct interaction with FtsZ, stimulating Z-ring assembly and thereby promoting cell division earlier in the cell cycle. Its recruitment to the Z-ring requires functional FtsA or ZipA.</text>
</comment>
<comment type="subunit">
    <text evidence="1">Homodimer. The ends of the coiled-coil dimer bind to each other, forming polymers. Interacts with FtsZ.</text>
</comment>
<comment type="subcellular location">
    <subcellularLocation>
        <location evidence="1">Cytoplasm</location>
    </subcellularLocation>
    <text evidence="1">Localizes to the septum at mid-cell, in a FtsZ-like pattern.</text>
</comment>
<comment type="similarity">
    <text evidence="1">Belongs to the ZapB family.</text>
</comment>
<evidence type="ECO:0000255" key="1">
    <source>
        <dbReference type="HAMAP-Rule" id="MF_01196"/>
    </source>
</evidence>